<feature type="chain" id="PRO_0000242356" description="Large ribosomal subunit protein uL4">
    <location>
        <begin position="1"/>
        <end position="204"/>
    </location>
</feature>
<feature type="region of interest" description="Disordered" evidence="2">
    <location>
        <begin position="49"/>
        <end position="75"/>
    </location>
</feature>
<accession>Q5HS91</accession>
<organism>
    <name type="scientific">Campylobacter jejuni (strain RM1221)</name>
    <dbReference type="NCBI Taxonomy" id="195099"/>
    <lineage>
        <taxon>Bacteria</taxon>
        <taxon>Pseudomonadati</taxon>
        <taxon>Campylobacterota</taxon>
        <taxon>Epsilonproteobacteria</taxon>
        <taxon>Campylobacterales</taxon>
        <taxon>Campylobacteraceae</taxon>
        <taxon>Campylobacter</taxon>
    </lineage>
</organism>
<reference key="1">
    <citation type="journal article" date="2005" name="PLoS Biol.">
        <title>Major structural differences and novel potential virulence mechanisms from the genomes of multiple Campylobacter species.</title>
        <authorList>
            <person name="Fouts D.E."/>
            <person name="Mongodin E.F."/>
            <person name="Mandrell R.E."/>
            <person name="Miller W.G."/>
            <person name="Rasko D.A."/>
            <person name="Ravel J."/>
            <person name="Brinkac L.M."/>
            <person name="DeBoy R.T."/>
            <person name="Parker C.T."/>
            <person name="Daugherty S.C."/>
            <person name="Dodson R.J."/>
            <person name="Durkin A.S."/>
            <person name="Madupu R."/>
            <person name="Sullivan S.A."/>
            <person name="Shetty J.U."/>
            <person name="Ayodeji M.A."/>
            <person name="Shvartsbeyn A."/>
            <person name="Schatz M.C."/>
            <person name="Badger J.H."/>
            <person name="Fraser C.M."/>
            <person name="Nelson K.E."/>
        </authorList>
    </citation>
    <scope>NUCLEOTIDE SEQUENCE [LARGE SCALE GENOMIC DNA]</scope>
    <source>
        <strain>RM1221</strain>
    </source>
</reference>
<sequence length="204" mass="22202">MSKVVVLNDKLEKAGELDLPSKYAEVNPHNLYLYVKSYLASLRANTAHTKGRSDVSGGGKKPWRQKGRGGARAGSTRTNVWVGGAVAFGPTNERNYFQKVNKKQKRLALERALADKAAKGVLFTADSLAIESGKTKDANAVIKKLGVKDALIVKDLLDEKTLLAYRNLANCYVVDVTEVNAYLVSVFNAVIMEKSALESITKEG</sequence>
<protein>
    <recommendedName>
        <fullName evidence="1">Large ribosomal subunit protein uL4</fullName>
    </recommendedName>
    <alternativeName>
        <fullName evidence="3">50S ribosomal protein L4</fullName>
    </alternativeName>
</protein>
<name>RL4_CAMJR</name>
<proteinExistence type="inferred from homology"/>
<comment type="function">
    <text evidence="1">One of the primary rRNA binding proteins, this protein initially binds near the 5'-end of the 23S rRNA. It is important during the early stages of 50S assembly. It makes multiple contacts with different domains of the 23S rRNA in the assembled 50S subunit and ribosome.</text>
</comment>
<comment type="function">
    <text evidence="1">Forms part of the polypeptide exit tunnel.</text>
</comment>
<comment type="subunit">
    <text evidence="1">Part of the 50S ribosomal subunit.</text>
</comment>
<comment type="similarity">
    <text evidence="1">Belongs to the universal ribosomal protein uL4 family.</text>
</comment>
<evidence type="ECO:0000255" key="1">
    <source>
        <dbReference type="HAMAP-Rule" id="MF_01328"/>
    </source>
</evidence>
<evidence type="ECO:0000256" key="2">
    <source>
        <dbReference type="SAM" id="MobiDB-lite"/>
    </source>
</evidence>
<evidence type="ECO:0000305" key="3"/>
<gene>
    <name evidence="1" type="primary">rplD</name>
    <name type="ordered locus">CJE1874</name>
</gene>
<keyword id="KW-0687">Ribonucleoprotein</keyword>
<keyword id="KW-0689">Ribosomal protein</keyword>
<keyword id="KW-0694">RNA-binding</keyword>
<keyword id="KW-0699">rRNA-binding</keyword>
<dbReference type="EMBL" id="CP000025">
    <property type="protein sequence ID" value="AAW36296.1"/>
    <property type="molecule type" value="Genomic_DNA"/>
</dbReference>
<dbReference type="RefSeq" id="WP_002783544.1">
    <property type="nucleotide sequence ID" value="NC_003912.7"/>
</dbReference>
<dbReference type="SMR" id="Q5HS91"/>
<dbReference type="GeneID" id="66544942"/>
<dbReference type="KEGG" id="cjr:CJE1874"/>
<dbReference type="HOGENOM" id="CLU_041575_5_2_7"/>
<dbReference type="GO" id="GO:1990904">
    <property type="term" value="C:ribonucleoprotein complex"/>
    <property type="evidence" value="ECO:0007669"/>
    <property type="project" value="UniProtKB-KW"/>
</dbReference>
<dbReference type="GO" id="GO:0005840">
    <property type="term" value="C:ribosome"/>
    <property type="evidence" value="ECO:0007669"/>
    <property type="project" value="UniProtKB-KW"/>
</dbReference>
<dbReference type="GO" id="GO:0019843">
    <property type="term" value="F:rRNA binding"/>
    <property type="evidence" value="ECO:0007669"/>
    <property type="project" value="UniProtKB-UniRule"/>
</dbReference>
<dbReference type="GO" id="GO:0003735">
    <property type="term" value="F:structural constituent of ribosome"/>
    <property type="evidence" value="ECO:0007669"/>
    <property type="project" value="InterPro"/>
</dbReference>
<dbReference type="GO" id="GO:0006412">
    <property type="term" value="P:translation"/>
    <property type="evidence" value="ECO:0007669"/>
    <property type="project" value="UniProtKB-UniRule"/>
</dbReference>
<dbReference type="FunFam" id="3.40.1370.10:FF:000008">
    <property type="entry name" value="50S ribosomal protein L4"/>
    <property type="match status" value="1"/>
</dbReference>
<dbReference type="Gene3D" id="3.40.1370.10">
    <property type="match status" value="1"/>
</dbReference>
<dbReference type="HAMAP" id="MF_01328_B">
    <property type="entry name" value="Ribosomal_uL4_B"/>
    <property type="match status" value="1"/>
</dbReference>
<dbReference type="InterPro" id="IPR002136">
    <property type="entry name" value="Ribosomal_uL4"/>
</dbReference>
<dbReference type="InterPro" id="IPR013005">
    <property type="entry name" value="Ribosomal_uL4-like"/>
</dbReference>
<dbReference type="InterPro" id="IPR023574">
    <property type="entry name" value="Ribosomal_uL4_dom_sf"/>
</dbReference>
<dbReference type="NCBIfam" id="TIGR03953">
    <property type="entry name" value="rplD_bact"/>
    <property type="match status" value="1"/>
</dbReference>
<dbReference type="PANTHER" id="PTHR10746">
    <property type="entry name" value="50S RIBOSOMAL PROTEIN L4"/>
    <property type="match status" value="1"/>
</dbReference>
<dbReference type="PANTHER" id="PTHR10746:SF6">
    <property type="entry name" value="LARGE RIBOSOMAL SUBUNIT PROTEIN UL4M"/>
    <property type="match status" value="1"/>
</dbReference>
<dbReference type="Pfam" id="PF00573">
    <property type="entry name" value="Ribosomal_L4"/>
    <property type="match status" value="1"/>
</dbReference>
<dbReference type="SUPFAM" id="SSF52166">
    <property type="entry name" value="Ribosomal protein L4"/>
    <property type="match status" value="1"/>
</dbReference>